<evidence type="ECO:0000250" key="1"/>
<evidence type="ECO:0000250" key="2">
    <source>
        <dbReference type="UniProtKB" id="P0C1S6"/>
    </source>
</evidence>
<evidence type="ECO:0000255" key="3">
    <source>
        <dbReference type="PROSITE-ProRule" id="PRU10089"/>
    </source>
</evidence>
<evidence type="ECO:0000305" key="4"/>
<name>SSPB_STAAM</name>
<feature type="signal peptide" evidence="1">
    <location>
        <begin position="1"/>
        <end position="36"/>
    </location>
</feature>
<feature type="propeptide" id="PRO_0000026563" evidence="1">
    <location>
        <begin position="37"/>
        <end position="219"/>
    </location>
</feature>
<feature type="chain" id="PRO_0000026564" description="Staphopain B">
    <location>
        <begin position="220"/>
        <end position="393"/>
    </location>
</feature>
<feature type="active site" evidence="3">
    <location>
        <position position="243"/>
    </location>
</feature>
<feature type="active site" evidence="3">
    <location>
        <position position="340"/>
    </location>
</feature>
<feature type="active site" evidence="3">
    <location>
        <position position="360"/>
    </location>
</feature>
<feature type="site" description="Cleavage; by SspA" evidence="1">
    <location>
        <begin position="219"/>
        <end position="220"/>
    </location>
</feature>
<keyword id="KW-0378">Hydrolase</keyword>
<keyword id="KW-0645">Protease</keyword>
<keyword id="KW-0964">Secreted</keyword>
<keyword id="KW-0732">Signal</keyword>
<keyword id="KW-0788">Thiol protease</keyword>
<keyword id="KW-0843">Virulence</keyword>
<keyword id="KW-0865">Zymogen</keyword>
<proteinExistence type="inferred from homology"/>
<comment type="function">
    <text evidence="2">Cysteine protease that plays an important role in the inhibition of host innate immune response. Degrades host elastin, fibrogen, fibronectin and kininogen. Blocks phagocytosis of opsonised S.aureus by neutrophils and monocytes by inducing their death in a proteolytic activity-dependent manner. Decreases surface expression of the 'don't eat me' signal CD31 on neutrophils. Cleaves host galectin-3/LGALS3, thereby inhibiting the neutrophil-activating ability of the lectin.</text>
</comment>
<comment type="activity regulation">
    <text evidence="1">Prematurely activated/folded staphopain B is inhibited by staphostatin B (SspC), which is probably required to protect staphylococcal cytoplasmic proteins from degradation by SspB.</text>
</comment>
<comment type="subunit">
    <text evidence="1">In the cytoplasm, prematurely activated/folded SspB forms a stable non-covalent complex with SspC.</text>
</comment>
<comment type="subcellular location">
    <subcellularLocation>
        <location evidence="1">Secreted</location>
    </subcellularLocation>
</comment>
<comment type="PTM">
    <text evidence="1">Proteolytically cleaved by staphylococcal serine protease (SspA).</text>
</comment>
<comment type="miscellaneous">
    <text evidence="1">The cascade of activation of extracellular proteases proceeds from the metalloprotease aureolysin (aur), through SspA to SspB.</text>
</comment>
<comment type="similarity">
    <text evidence="4">Belongs to the peptidase C47 family.</text>
</comment>
<dbReference type="EC" id="3.4.22.-"/>
<dbReference type="EMBL" id="BA000017">
    <property type="protein sequence ID" value="BAB57209.1"/>
    <property type="molecule type" value="Genomic_DNA"/>
</dbReference>
<dbReference type="RefSeq" id="WP_001089094.1">
    <property type="nucleotide sequence ID" value="NC_002758.2"/>
</dbReference>
<dbReference type="SMR" id="Q99V46"/>
<dbReference type="MEROPS" id="C47.002"/>
<dbReference type="KEGG" id="sav:SAV1047"/>
<dbReference type="HOGENOM" id="CLU_069043_0_0_9"/>
<dbReference type="PRO" id="PR:Q99V46"/>
<dbReference type="Proteomes" id="UP000002481">
    <property type="component" value="Chromosome"/>
</dbReference>
<dbReference type="GO" id="GO:0005576">
    <property type="term" value="C:extracellular region"/>
    <property type="evidence" value="ECO:0007669"/>
    <property type="project" value="UniProtKB-SubCell"/>
</dbReference>
<dbReference type="GO" id="GO:0008234">
    <property type="term" value="F:cysteine-type peptidase activity"/>
    <property type="evidence" value="ECO:0007669"/>
    <property type="project" value="UniProtKB-KW"/>
</dbReference>
<dbReference type="GO" id="GO:0006508">
    <property type="term" value="P:proteolysis"/>
    <property type="evidence" value="ECO:0007669"/>
    <property type="project" value="UniProtKB-KW"/>
</dbReference>
<dbReference type="Gene3D" id="3.90.70.10">
    <property type="entry name" value="Cysteine proteinases"/>
    <property type="match status" value="1"/>
</dbReference>
<dbReference type="Gene3D" id="3.10.500.10">
    <property type="entry name" value="Staphopain proregion domain"/>
    <property type="match status" value="1"/>
</dbReference>
<dbReference type="InterPro" id="IPR046350">
    <property type="entry name" value="Cystatin_sf"/>
</dbReference>
<dbReference type="InterPro" id="IPR038765">
    <property type="entry name" value="Papain-like_cys_pep_sf"/>
</dbReference>
<dbReference type="InterPro" id="IPR025660">
    <property type="entry name" value="Pept_his_AS"/>
</dbReference>
<dbReference type="InterPro" id="IPR008750">
    <property type="entry name" value="Peptidase_C47"/>
</dbReference>
<dbReference type="InterPro" id="IPR028076">
    <property type="entry name" value="Staphopain_pro"/>
</dbReference>
<dbReference type="InterPro" id="IPR037155">
    <property type="entry name" value="Staphopain_pro_sf"/>
</dbReference>
<dbReference type="Pfam" id="PF05543">
    <property type="entry name" value="Peptidase_C47"/>
    <property type="match status" value="1"/>
</dbReference>
<dbReference type="Pfam" id="PF14731">
    <property type="entry name" value="Staphopain_pro"/>
    <property type="match status" value="1"/>
</dbReference>
<dbReference type="SUPFAM" id="SSF54403">
    <property type="entry name" value="Cystatin/monellin"/>
    <property type="match status" value="1"/>
</dbReference>
<dbReference type="SUPFAM" id="SSF54001">
    <property type="entry name" value="Cysteine proteinases"/>
    <property type="match status" value="1"/>
</dbReference>
<dbReference type="PROSITE" id="PS00639">
    <property type="entry name" value="THIOL_PROTEASE_HIS"/>
    <property type="match status" value="1"/>
</dbReference>
<protein>
    <recommendedName>
        <fullName>Staphopain B</fullName>
        <ecNumber>3.4.22.-</ecNumber>
    </recommendedName>
    <alternativeName>
        <fullName>Staphylococcal cysteine proteinase B</fullName>
    </alternativeName>
    <alternativeName>
        <fullName>Staphylopain B</fullName>
    </alternativeName>
</protein>
<organism>
    <name type="scientific">Staphylococcus aureus (strain Mu50 / ATCC 700699)</name>
    <dbReference type="NCBI Taxonomy" id="158878"/>
    <lineage>
        <taxon>Bacteria</taxon>
        <taxon>Bacillati</taxon>
        <taxon>Bacillota</taxon>
        <taxon>Bacilli</taxon>
        <taxon>Bacillales</taxon>
        <taxon>Staphylococcaceae</taxon>
        <taxon>Staphylococcus</taxon>
    </lineage>
</organism>
<gene>
    <name type="primary">sspB</name>
    <name type="ordered locus">SAV1047</name>
</gene>
<accession>Q99V46</accession>
<sequence>MNSSYKSRVFNIISIIMVSMLILSLGAFANNNKAKADSHSKQLEINVKSDKVPQKVKDLAQQQFAGYAKALDKQSNAKTGKYELGEAFKIYKFNGEEDNSYYYPVIKDGKIVYTLTLSPKNKDDLNKSKEDMNYSVKISNFIAKDLDQIKDKNSNITVLTDEKGFYFEEDGKVRLVKATPLPGNVKEKESAKTVSAKLKQELKNTVTPTKVEENEAIQEDQVQYENTLKNFKIREQQFDNSWCAGFSMAALLNATKNTDTYNAHDIMRTLYPEVSEQDLPNCSTFPNQMIEYGKSQGRDIHYQEGVPSYEQVDQLTKDNVGIMILAQSVSQNPNDPHLGHALAVVGNAKINDQEKLIYWNPWDTELSIQDADSSLLHLSFNRDYNWYGSMIGY</sequence>
<reference key="1">
    <citation type="journal article" date="2001" name="Lancet">
        <title>Whole genome sequencing of meticillin-resistant Staphylococcus aureus.</title>
        <authorList>
            <person name="Kuroda M."/>
            <person name="Ohta T."/>
            <person name="Uchiyama I."/>
            <person name="Baba T."/>
            <person name="Yuzawa H."/>
            <person name="Kobayashi I."/>
            <person name="Cui L."/>
            <person name="Oguchi A."/>
            <person name="Aoki K."/>
            <person name="Nagai Y."/>
            <person name="Lian J.-Q."/>
            <person name="Ito T."/>
            <person name="Kanamori M."/>
            <person name="Matsumaru H."/>
            <person name="Maruyama A."/>
            <person name="Murakami H."/>
            <person name="Hosoyama A."/>
            <person name="Mizutani-Ui Y."/>
            <person name="Takahashi N.K."/>
            <person name="Sawano T."/>
            <person name="Inoue R."/>
            <person name="Kaito C."/>
            <person name="Sekimizu K."/>
            <person name="Hirakawa H."/>
            <person name="Kuhara S."/>
            <person name="Goto S."/>
            <person name="Yabuzaki J."/>
            <person name="Kanehisa M."/>
            <person name="Yamashita A."/>
            <person name="Oshima K."/>
            <person name="Furuya K."/>
            <person name="Yoshino C."/>
            <person name="Shiba T."/>
            <person name="Hattori M."/>
            <person name="Ogasawara N."/>
            <person name="Hayashi H."/>
            <person name="Hiramatsu K."/>
        </authorList>
    </citation>
    <scope>NUCLEOTIDE SEQUENCE [LARGE SCALE GENOMIC DNA]</scope>
    <source>
        <strain>Mu50 / ATCC 700699</strain>
    </source>
</reference>